<protein>
    <recommendedName>
        <fullName evidence="1">Transcription antitermination protein NusB</fullName>
    </recommendedName>
    <alternativeName>
        <fullName evidence="1">Antitermination factor NusB</fullName>
    </alternativeName>
</protein>
<proteinExistence type="inferred from homology"/>
<feature type="chain" id="PRO_1000092592" description="Transcription antitermination protein NusB">
    <location>
        <begin position="1"/>
        <end position="140"/>
    </location>
</feature>
<sequence length="140" mass="15964">MTSPLLESRRQLRKCAFQALMSLEFGTDVETACRFAYTHDREDTDVQLPAFLIDLVSGVQAKKEELDKQITQHLKAGWTIERLTLVERNLLRLGVFEITSFDTPQLVAVNEAIELAKDFSDQKSARFINGLLSQFVTEEQ</sequence>
<evidence type="ECO:0000255" key="1">
    <source>
        <dbReference type="HAMAP-Rule" id="MF_00073"/>
    </source>
</evidence>
<accession>B5E1P3</accession>
<keyword id="KW-0694">RNA-binding</keyword>
<keyword id="KW-0804">Transcription</keyword>
<keyword id="KW-0889">Transcription antitermination</keyword>
<keyword id="KW-0805">Transcription regulation</keyword>
<gene>
    <name evidence="1" type="primary">nusB</name>
    <name type="ordered locus">SPG_0396</name>
</gene>
<comment type="function">
    <text evidence="1">Involved in transcription antitermination. Required for transcription of ribosomal RNA (rRNA) genes. Binds specifically to the boxA antiterminator sequence of the ribosomal RNA (rrn) operons.</text>
</comment>
<comment type="similarity">
    <text evidence="1">Belongs to the NusB family.</text>
</comment>
<name>NUSB_STRP4</name>
<organism>
    <name type="scientific">Streptococcus pneumoniae serotype 19F (strain G54)</name>
    <dbReference type="NCBI Taxonomy" id="512566"/>
    <lineage>
        <taxon>Bacteria</taxon>
        <taxon>Bacillati</taxon>
        <taxon>Bacillota</taxon>
        <taxon>Bacilli</taxon>
        <taxon>Lactobacillales</taxon>
        <taxon>Streptococcaceae</taxon>
        <taxon>Streptococcus</taxon>
    </lineage>
</organism>
<dbReference type="EMBL" id="CP001015">
    <property type="protein sequence ID" value="ACF54894.1"/>
    <property type="molecule type" value="Genomic_DNA"/>
</dbReference>
<dbReference type="SMR" id="B5E1P3"/>
<dbReference type="KEGG" id="spx:SPG_0396"/>
<dbReference type="HOGENOM" id="CLU_087843_3_2_9"/>
<dbReference type="GO" id="GO:0005829">
    <property type="term" value="C:cytosol"/>
    <property type="evidence" value="ECO:0007669"/>
    <property type="project" value="TreeGrafter"/>
</dbReference>
<dbReference type="GO" id="GO:0003723">
    <property type="term" value="F:RNA binding"/>
    <property type="evidence" value="ECO:0007669"/>
    <property type="project" value="UniProtKB-UniRule"/>
</dbReference>
<dbReference type="GO" id="GO:0006353">
    <property type="term" value="P:DNA-templated transcription termination"/>
    <property type="evidence" value="ECO:0007669"/>
    <property type="project" value="UniProtKB-UniRule"/>
</dbReference>
<dbReference type="GO" id="GO:0031564">
    <property type="term" value="P:transcription antitermination"/>
    <property type="evidence" value="ECO:0007669"/>
    <property type="project" value="UniProtKB-KW"/>
</dbReference>
<dbReference type="FunFam" id="1.10.940.10:FF:000008">
    <property type="entry name" value="Transcription antitermination protein NusB"/>
    <property type="match status" value="1"/>
</dbReference>
<dbReference type="Gene3D" id="1.10.940.10">
    <property type="entry name" value="NusB-like"/>
    <property type="match status" value="1"/>
</dbReference>
<dbReference type="HAMAP" id="MF_00073">
    <property type="entry name" value="NusB"/>
    <property type="match status" value="1"/>
</dbReference>
<dbReference type="InterPro" id="IPR035926">
    <property type="entry name" value="NusB-like_sf"/>
</dbReference>
<dbReference type="InterPro" id="IPR011605">
    <property type="entry name" value="NusB_fam"/>
</dbReference>
<dbReference type="InterPro" id="IPR006027">
    <property type="entry name" value="NusB_RsmB_TIM44"/>
</dbReference>
<dbReference type="NCBIfam" id="TIGR01951">
    <property type="entry name" value="nusB"/>
    <property type="match status" value="1"/>
</dbReference>
<dbReference type="NCBIfam" id="NF001223">
    <property type="entry name" value="PRK00202.1-1"/>
    <property type="match status" value="1"/>
</dbReference>
<dbReference type="PANTHER" id="PTHR11078:SF3">
    <property type="entry name" value="ANTITERMINATION NUSB DOMAIN-CONTAINING PROTEIN"/>
    <property type="match status" value="1"/>
</dbReference>
<dbReference type="PANTHER" id="PTHR11078">
    <property type="entry name" value="N UTILIZATION SUBSTANCE PROTEIN B-RELATED"/>
    <property type="match status" value="1"/>
</dbReference>
<dbReference type="Pfam" id="PF01029">
    <property type="entry name" value="NusB"/>
    <property type="match status" value="1"/>
</dbReference>
<dbReference type="SUPFAM" id="SSF48013">
    <property type="entry name" value="NusB-like"/>
    <property type="match status" value="1"/>
</dbReference>
<reference key="1">
    <citation type="journal article" date="2001" name="Microb. Drug Resist.">
        <title>Annotated draft genomic sequence from a Streptococcus pneumoniae type 19F clinical isolate.</title>
        <authorList>
            <person name="Dopazo J."/>
            <person name="Mendoza A."/>
            <person name="Herrero J."/>
            <person name="Caldara F."/>
            <person name="Humbert Y."/>
            <person name="Friedli L."/>
            <person name="Guerrier M."/>
            <person name="Grand-Schenk E."/>
            <person name="Gandin C."/>
            <person name="de Francesco M."/>
            <person name="Polissi A."/>
            <person name="Buell G."/>
            <person name="Feger G."/>
            <person name="Garcia E."/>
            <person name="Peitsch M."/>
            <person name="Garcia-Bustos J.F."/>
        </authorList>
    </citation>
    <scope>NUCLEOTIDE SEQUENCE [LARGE SCALE GENOMIC DNA]</scope>
    <source>
        <strain>G54</strain>
    </source>
</reference>
<reference key="2">
    <citation type="submission" date="2008-03" db="EMBL/GenBank/DDBJ databases">
        <title>Pneumococcal beta glucoside metabolism investigated by whole genome comparison.</title>
        <authorList>
            <person name="Mulas L."/>
            <person name="Trappetti C."/>
            <person name="Hakenbeck R."/>
            <person name="Iannelli F."/>
            <person name="Pozzi G."/>
            <person name="Davidsen T.M."/>
            <person name="Tettelin H."/>
            <person name="Oggioni M."/>
        </authorList>
    </citation>
    <scope>NUCLEOTIDE SEQUENCE [LARGE SCALE GENOMIC DNA]</scope>
    <source>
        <strain>G54</strain>
    </source>
</reference>